<sequence length="1401" mass="154355">MKSCGVSLATAAAAAAAAAFGDEEKKMAAGKASGESEEASPSLTAEEREALGGLDSRLFGFVRFHEDGARMKALLGKAVRCYESLILKAEGKVESDFFCQLGHFNLLLEDYPKALSAYQRYYSLQSDYWKNAAFLYGLGLVYFHYNAFQWAIKAFQEVLYVDPSFCRAKEIHLRLGLMFKVNTDYESSLKHFQLALVDCNPCTLSNAEIQFHIAHLYETQRKYHSAKEAYEQLLQTENLSAQVKATILQQLGWMHHTVDLLGDKATKESYAIQYLQKSLEADPNSGQSWYFLGRCYSSIGKVQDAFISYRQSIDKSEASADTWCSIGVLYQQQNQPMDALQAYICAVQLDHGHAAAWMDLGTLYESCNQPQDAIKCYLNATRSKNCSNTSGLAARIKYLQAQLCNLPQGSLQNKTKLLPSIEEAWSLPIPAELTSRQGAMNTAQQNTSDNWSGGNAPPPVEQQTHSWCLTPQKLQHLEQLRANRNNLNPAQKLMLEQLESQFVLMQQHQMRQTGVAQVRPTGILNGPTVDSSLPTNSVSGQQPQLPLTRMPSVSQPGVHTACPRQTLANGPFSAGHVPCSTSRTLGSTDTVLIGNNHVTGSGSNGNVPYLQRNAPTLPHNRTNLTSSTEEPWKNQLSNSTQGLHKGPSSHLAGPNGERPLSSTGPSQHLQAAGSGIQNQNGHPTLPSNSVTQGAALNHLSSHTATSGGQQGITLTKESKPSGNTLTVPETSRQTGETPNSTASVEGLPNHVHQVMADAVCSPSHGDSKSPGLLSSDNPQLSALLMGKANNNVGPGTCDKVNNIHPTVHTKTDNSVASSPSSAISTATPSPKSTEQTTTNSVTSLNSPHSGLHTINGEGMEESQSPIKTDLLLVSHRPSPQIIPSMSVSIYPSSAEVLKACRNLGKNGLSNSSILLDKCPPPRPPSSPYPPLPKDKLNPPTPSIYLENKRDAFFPPLHQFCTNPNNPVTVIRGLAGALKLDLGLFSTKTLVEANNEHMVEVRTQLLQPADENWDPTGTKKIWHCESNRSHTTIAKYAQYQASSFQESLREENEKRSHHKDHSDSESTSSDNSGKRRKGPFKTIKFGTNIDLSDDKKWKLQLHELTKLPAFVRVVSAGNLLSHVGHTILGMNTVQLYMKVPGSRTPGHQENNNFCSVNINIGPGDCEWFVVPEGYWGVLNDFCEKNNLNFLMGSWWPNLEDLYEANVPVYRFIQRPGDLVWINAGTVHWVQAIGWCNNIAWNVGPLTACQYKLAVERYEWNKLQNVKSIVPMVHLSWNMARNIKVSDPKLFEMIKYCLLRTLKQCQTLREALIAAGKEIIWHGRTKEEPAHYCSICEVEVFDLLFVTNESNSRKTYIVHCQDCARKTSGNLENFVVLEQYKMEDLMQVYDQFTLAPPLPSASS</sequence>
<name>KDM6A_MOUSE</name>
<evidence type="ECO:0000250" key="1"/>
<evidence type="ECO:0000250" key="2">
    <source>
        <dbReference type="UniProtKB" id="O14607"/>
    </source>
</evidence>
<evidence type="ECO:0000250" key="3">
    <source>
        <dbReference type="UniProtKB" id="O15550"/>
    </source>
</evidence>
<evidence type="ECO:0000255" key="4">
    <source>
        <dbReference type="PROSITE-ProRule" id="PRU00538"/>
    </source>
</evidence>
<evidence type="ECO:0000256" key="5">
    <source>
        <dbReference type="SAM" id="MobiDB-lite"/>
    </source>
</evidence>
<evidence type="ECO:0000269" key="6">
    <source>
    </source>
</evidence>
<evidence type="ECO:0000269" key="7">
    <source>
    </source>
</evidence>
<evidence type="ECO:0000269" key="8">
    <source>
    </source>
</evidence>
<evidence type="ECO:0000303" key="9">
    <source>
    </source>
</evidence>
<evidence type="ECO:0000305" key="10"/>
<evidence type="ECO:0007744" key="11">
    <source>
    </source>
</evidence>
<evidence type="ECO:0007744" key="12">
    <source>
    </source>
</evidence>
<dbReference type="EC" id="1.14.11.68" evidence="3"/>
<dbReference type="EMBL" id="AL732451">
    <property type="status" value="NOT_ANNOTATED_CDS"/>
    <property type="molecule type" value="Genomic_DNA"/>
</dbReference>
<dbReference type="EMBL" id="AL773547">
    <property type="status" value="NOT_ANNOTATED_CDS"/>
    <property type="molecule type" value="Genomic_DNA"/>
</dbReference>
<dbReference type="EMBL" id="BC053433">
    <property type="protein sequence ID" value="AAH53433.1"/>
    <property type="molecule type" value="mRNA"/>
</dbReference>
<dbReference type="EMBL" id="BC075703">
    <property type="protein sequence ID" value="AAH75703.1"/>
    <property type="status" value="ALT_INIT"/>
    <property type="molecule type" value="mRNA"/>
</dbReference>
<dbReference type="EMBL" id="AJ002730">
    <property type="protein sequence ID" value="CAA05692.1"/>
    <property type="molecule type" value="mRNA"/>
</dbReference>
<dbReference type="CCDS" id="CCDS30037.1">
    <molecule id="O70546-2"/>
</dbReference>
<dbReference type="CCDS" id="CCDS81102.1">
    <molecule id="O70546-1"/>
</dbReference>
<dbReference type="RefSeq" id="NP_001297373.1">
    <molecule id="O70546-1"/>
    <property type="nucleotide sequence ID" value="NM_001310444.2"/>
</dbReference>
<dbReference type="RefSeq" id="NP_033509.1">
    <molecule id="O70546-2"/>
    <property type="nucleotide sequence ID" value="NM_009483.3"/>
</dbReference>
<dbReference type="SMR" id="O70546"/>
<dbReference type="BioGRID" id="204471">
    <property type="interactions" value="10"/>
</dbReference>
<dbReference type="CORUM" id="O70546"/>
<dbReference type="FunCoup" id="O70546">
    <property type="interactions" value="3885"/>
</dbReference>
<dbReference type="IntAct" id="O70546">
    <property type="interactions" value="6"/>
</dbReference>
<dbReference type="MINT" id="O70546"/>
<dbReference type="STRING" id="10090.ENSMUSP00000061539"/>
<dbReference type="GlyGen" id="O70546">
    <property type="glycosylation" value="6 sites, 1 N-linked glycan (1 site), 1 O-linked glycan (4 sites)"/>
</dbReference>
<dbReference type="iPTMnet" id="O70546"/>
<dbReference type="PhosphoSitePlus" id="O70546"/>
<dbReference type="PaxDb" id="10090-ENSMUSP00000061539"/>
<dbReference type="PeptideAtlas" id="O70546"/>
<dbReference type="ProteomicsDB" id="264991">
    <molecule id="O70546-1"/>
</dbReference>
<dbReference type="ProteomicsDB" id="264992">
    <molecule id="O70546-2"/>
</dbReference>
<dbReference type="Pumba" id="O70546"/>
<dbReference type="Antibodypedia" id="639">
    <property type="antibodies" value="202 antibodies from 26 providers"/>
</dbReference>
<dbReference type="DNASU" id="22289"/>
<dbReference type="Ensembl" id="ENSMUST00000044484.13">
    <molecule id="O70546-1"/>
    <property type="protein sequence ID" value="ENSMUSP00000045862.7"/>
    <property type="gene ID" value="ENSMUSG00000037369.18"/>
</dbReference>
<dbReference type="Ensembl" id="ENSMUST00000052368.9">
    <molecule id="O70546-2"/>
    <property type="protein sequence ID" value="ENSMUSP00000061539.9"/>
    <property type="gene ID" value="ENSMUSG00000037369.18"/>
</dbReference>
<dbReference type="GeneID" id="22289"/>
<dbReference type="KEGG" id="mmu:22289"/>
<dbReference type="UCSC" id="uc009ssk.1">
    <molecule id="O70546-1"/>
    <property type="organism name" value="mouse"/>
</dbReference>
<dbReference type="UCSC" id="uc009ssm.1">
    <molecule id="O70546-2"/>
    <property type="organism name" value="mouse"/>
</dbReference>
<dbReference type="AGR" id="MGI:1095419"/>
<dbReference type="CTD" id="7403"/>
<dbReference type="MGI" id="MGI:1095419">
    <property type="gene designation" value="Kdm6a"/>
</dbReference>
<dbReference type="VEuPathDB" id="HostDB:ENSMUSG00000037369"/>
<dbReference type="eggNOG" id="KOG1124">
    <property type="taxonomic scope" value="Eukaryota"/>
</dbReference>
<dbReference type="eggNOG" id="KOG1246">
    <property type="taxonomic scope" value="Eukaryota"/>
</dbReference>
<dbReference type="GeneTree" id="ENSGT00940000155202"/>
<dbReference type="HOGENOM" id="CLU_003187_0_0_1"/>
<dbReference type="InParanoid" id="O70546"/>
<dbReference type="OMA" id="AGMPYKS"/>
<dbReference type="OrthoDB" id="418911at2759"/>
<dbReference type="TreeFam" id="TF317405"/>
<dbReference type="BRENDA" id="1.14.11.68">
    <property type="organism ID" value="3474"/>
</dbReference>
<dbReference type="Reactome" id="R-MMU-3214842">
    <property type="pathway name" value="HDMs demethylate histones"/>
</dbReference>
<dbReference type="Reactome" id="R-MMU-9772755">
    <property type="pathway name" value="Formation of WDR5-containing histone-modifying complexes"/>
</dbReference>
<dbReference type="Reactome" id="R-MMU-9818564">
    <property type="pathway name" value="Epigenetic regulation of gene expression by MLL3 and MLL4 complexes"/>
</dbReference>
<dbReference type="BioGRID-ORCS" id="22289">
    <property type="hits" value="4 hits in 67 CRISPR screens"/>
</dbReference>
<dbReference type="ChiTaRS" id="Kdm6a">
    <property type="organism name" value="mouse"/>
</dbReference>
<dbReference type="PRO" id="PR:O70546"/>
<dbReference type="Proteomes" id="UP000000589">
    <property type="component" value="Chromosome X"/>
</dbReference>
<dbReference type="RNAct" id="O70546">
    <property type="molecule type" value="protein"/>
</dbReference>
<dbReference type="Bgee" id="ENSMUSG00000037369">
    <property type="expression patterns" value="Expressed in animal zygote and 259 other cell types or tissues"/>
</dbReference>
<dbReference type="ExpressionAtlas" id="O70546">
    <property type="expression patterns" value="baseline and differential"/>
</dbReference>
<dbReference type="GO" id="GO:0035097">
    <property type="term" value="C:histone methyltransferase complex"/>
    <property type="evidence" value="ECO:0000314"/>
    <property type="project" value="MGI"/>
</dbReference>
<dbReference type="GO" id="GO:0005654">
    <property type="term" value="C:nucleoplasm"/>
    <property type="evidence" value="ECO:0000304"/>
    <property type="project" value="Reactome"/>
</dbReference>
<dbReference type="GO" id="GO:0005634">
    <property type="term" value="C:nucleus"/>
    <property type="evidence" value="ECO:0000314"/>
    <property type="project" value="MGI"/>
</dbReference>
<dbReference type="GO" id="GO:0031490">
    <property type="term" value="F:chromatin DNA binding"/>
    <property type="evidence" value="ECO:0000314"/>
    <property type="project" value="MGI"/>
</dbReference>
<dbReference type="GO" id="GO:0071558">
    <property type="term" value="F:histone H3K27me2/H3K27me3 demethylase activity"/>
    <property type="evidence" value="ECO:0000314"/>
    <property type="project" value="MGI"/>
</dbReference>
<dbReference type="GO" id="GO:0042802">
    <property type="term" value="F:identical protein binding"/>
    <property type="evidence" value="ECO:0000314"/>
    <property type="project" value="MGI"/>
</dbReference>
<dbReference type="GO" id="GO:0046872">
    <property type="term" value="F:metal ion binding"/>
    <property type="evidence" value="ECO:0007669"/>
    <property type="project" value="UniProtKB-KW"/>
</dbReference>
<dbReference type="GO" id="GO:0000978">
    <property type="term" value="F:RNA polymerase II cis-regulatory region sequence-specific DNA binding"/>
    <property type="evidence" value="ECO:0000314"/>
    <property type="project" value="MGI"/>
</dbReference>
<dbReference type="GO" id="GO:1904385">
    <property type="term" value="P:cellular response to angiotensin"/>
    <property type="evidence" value="ECO:0007669"/>
    <property type="project" value="Ensembl"/>
</dbReference>
<dbReference type="GO" id="GO:1990859">
    <property type="term" value="P:cellular response to endothelin"/>
    <property type="evidence" value="ECO:0007669"/>
    <property type="project" value="Ensembl"/>
</dbReference>
<dbReference type="GO" id="GO:0071456">
    <property type="term" value="P:cellular response to hypoxia"/>
    <property type="evidence" value="ECO:0007669"/>
    <property type="project" value="Ensembl"/>
</dbReference>
<dbReference type="GO" id="GO:0071560">
    <property type="term" value="P:cellular response to transforming growth factor beta stimulus"/>
    <property type="evidence" value="ECO:0007669"/>
    <property type="project" value="Ensembl"/>
</dbReference>
<dbReference type="GO" id="GO:0071305">
    <property type="term" value="P:cellular response to vitamin D"/>
    <property type="evidence" value="ECO:0007669"/>
    <property type="project" value="Ensembl"/>
</dbReference>
<dbReference type="GO" id="GO:0006338">
    <property type="term" value="P:chromatin remodeling"/>
    <property type="evidence" value="ECO:0000315"/>
    <property type="project" value="UniProtKB"/>
</dbReference>
<dbReference type="GO" id="GO:0072359">
    <property type="term" value="P:circulatory system development"/>
    <property type="evidence" value="ECO:0000315"/>
    <property type="project" value="MGI"/>
</dbReference>
<dbReference type="GO" id="GO:0048568">
    <property type="term" value="P:embryonic organ development"/>
    <property type="evidence" value="ECO:0000315"/>
    <property type="project" value="MGI"/>
</dbReference>
<dbReference type="GO" id="GO:0007507">
    <property type="term" value="P:heart development"/>
    <property type="evidence" value="ECO:0000315"/>
    <property type="project" value="MGI"/>
</dbReference>
<dbReference type="GO" id="GO:0003007">
    <property type="term" value="P:heart morphogenesis"/>
    <property type="evidence" value="ECO:0000315"/>
    <property type="project" value="MGI"/>
</dbReference>
<dbReference type="GO" id="GO:0001701">
    <property type="term" value="P:in utero embryonic development"/>
    <property type="evidence" value="ECO:0000315"/>
    <property type="project" value="MGI"/>
</dbReference>
<dbReference type="GO" id="GO:0048333">
    <property type="term" value="P:mesodermal cell differentiation"/>
    <property type="evidence" value="ECO:0000315"/>
    <property type="project" value="MGI"/>
</dbReference>
<dbReference type="GO" id="GO:0035264">
    <property type="term" value="P:multicellular organism growth"/>
    <property type="evidence" value="ECO:0000315"/>
    <property type="project" value="MGI"/>
</dbReference>
<dbReference type="GO" id="GO:1903298">
    <property type="term" value="P:negative regulation of hypoxia-induced intrinsic apoptotic signaling pathway"/>
    <property type="evidence" value="ECO:0007669"/>
    <property type="project" value="Ensembl"/>
</dbReference>
<dbReference type="GO" id="GO:0001843">
    <property type="term" value="P:neural tube closure"/>
    <property type="evidence" value="ECO:0000315"/>
    <property type="project" value="MGI"/>
</dbReference>
<dbReference type="GO" id="GO:0021915">
    <property type="term" value="P:neural tube development"/>
    <property type="evidence" value="ECO:0000315"/>
    <property type="project" value="MGI"/>
</dbReference>
<dbReference type="GO" id="GO:0048570">
    <property type="term" value="P:notochord morphogenesis"/>
    <property type="evidence" value="ECO:0000315"/>
    <property type="project" value="MGI"/>
</dbReference>
<dbReference type="GO" id="GO:0045793">
    <property type="term" value="P:positive regulation of cell size"/>
    <property type="evidence" value="ECO:0007669"/>
    <property type="project" value="Ensembl"/>
</dbReference>
<dbReference type="GO" id="GO:0010628">
    <property type="term" value="P:positive regulation of gene expression"/>
    <property type="evidence" value="ECO:0000315"/>
    <property type="project" value="MGI"/>
</dbReference>
<dbReference type="GO" id="GO:0045944">
    <property type="term" value="P:positive regulation of transcription by RNA polymerase II"/>
    <property type="evidence" value="ECO:0007669"/>
    <property type="project" value="Ensembl"/>
</dbReference>
<dbReference type="GO" id="GO:0036211">
    <property type="term" value="P:protein modification process"/>
    <property type="evidence" value="ECO:0007669"/>
    <property type="project" value="Ensembl"/>
</dbReference>
<dbReference type="GO" id="GO:0010468">
    <property type="term" value="P:regulation of gene expression"/>
    <property type="evidence" value="ECO:0000315"/>
    <property type="project" value="MGI"/>
</dbReference>
<dbReference type="GO" id="GO:0003016">
    <property type="term" value="P:respiratory system process"/>
    <property type="evidence" value="ECO:0000315"/>
    <property type="project" value="MGI"/>
</dbReference>
<dbReference type="GO" id="GO:0032525">
    <property type="term" value="P:somite rostral/caudal axis specification"/>
    <property type="evidence" value="ECO:0000315"/>
    <property type="project" value="MGI"/>
</dbReference>
<dbReference type="FunFam" id="1.25.40.10:FF:000022">
    <property type="entry name" value="lysine-specific demethylase 6A isoform X1"/>
    <property type="match status" value="1"/>
</dbReference>
<dbReference type="FunFam" id="1.20.58.1370:FF:000001">
    <property type="entry name" value="lysine-specific demethylase 6A isoform X2"/>
    <property type="match status" value="1"/>
</dbReference>
<dbReference type="FunFam" id="2.10.110.20:FF:000001">
    <property type="entry name" value="lysine-specific demethylase 6A isoform X2"/>
    <property type="match status" value="1"/>
</dbReference>
<dbReference type="FunFam" id="2.60.120.650:FF:000002">
    <property type="entry name" value="lysine-specific demethylase 6A isoform X2"/>
    <property type="match status" value="1"/>
</dbReference>
<dbReference type="FunFam" id="1.25.40.10:FF:000011">
    <property type="entry name" value="lysine-specific demethylase 6A isoform X3"/>
    <property type="match status" value="1"/>
</dbReference>
<dbReference type="FunFam" id="1.20.58.1370:FF:000002">
    <property type="entry name" value="lysine-specific demethylase 6A isoform X6"/>
    <property type="match status" value="1"/>
</dbReference>
<dbReference type="Gene3D" id="1.20.58.1370">
    <property type="match status" value="2"/>
</dbReference>
<dbReference type="Gene3D" id="2.10.110.20">
    <property type="match status" value="1"/>
</dbReference>
<dbReference type="Gene3D" id="2.60.120.650">
    <property type="entry name" value="Cupin"/>
    <property type="match status" value="1"/>
</dbReference>
<dbReference type="Gene3D" id="1.25.40.10">
    <property type="entry name" value="Tetratricopeptide repeat domain"/>
    <property type="match status" value="2"/>
</dbReference>
<dbReference type="InterPro" id="IPR051630">
    <property type="entry name" value="Corepressor-Demethylase"/>
</dbReference>
<dbReference type="InterPro" id="IPR003347">
    <property type="entry name" value="JmjC_dom"/>
</dbReference>
<dbReference type="InterPro" id="IPR046941">
    <property type="entry name" value="KDM6_GATAL_sf"/>
</dbReference>
<dbReference type="InterPro" id="IPR048562">
    <property type="entry name" value="KDM6A_B-like_C-hel"/>
</dbReference>
<dbReference type="InterPro" id="IPR048560">
    <property type="entry name" value="KDM6A_B-like_GATAL"/>
</dbReference>
<dbReference type="InterPro" id="IPR011990">
    <property type="entry name" value="TPR-like_helical_dom_sf"/>
</dbReference>
<dbReference type="InterPro" id="IPR019734">
    <property type="entry name" value="TPR_rpt"/>
</dbReference>
<dbReference type="PANTHER" id="PTHR14017">
    <property type="entry name" value="LYSINE-SPECIFIC DEMETHYLASE"/>
    <property type="match status" value="1"/>
</dbReference>
<dbReference type="PANTHER" id="PTHR14017:SF9">
    <property type="entry name" value="LYSINE-SPECIFIC DEMETHYLASE 6A"/>
    <property type="match status" value="1"/>
</dbReference>
<dbReference type="Pfam" id="PF02373">
    <property type="entry name" value="JmjC"/>
    <property type="match status" value="1"/>
</dbReference>
<dbReference type="Pfam" id="PF21322">
    <property type="entry name" value="KDM6_C-hel"/>
    <property type="match status" value="1"/>
</dbReference>
<dbReference type="Pfam" id="PF21326">
    <property type="entry name" value="KDM6_GATAL"/>
    <property type="match status" value="1"/>
</dbReference>
<dbReference type="Pfam" id="PF13181">
    <property type="entry name" value="TPR_8"/>
    <property type="match status" value="1"/>
</dbReference>
<dbReference type="SMART" id="SM00558">
    <property type="entry name" value="JmjC"/>
    <property type="match status" value="1"/>
</dbReference>
<dbReference type="SMART" id="SM00028">
    <property type="entry name" value="TPR"/>
    <property type="match status" value="6"/>
</dbReference>
<dbReference type="SUPFAM" id="SSF51197">
    <property type="entry name" value="Clavaminate synthase-like"/>
    <property type="match status" value="1"/>
</dbReference>
<dbReference type="SUPFAM" id="SSF48452">
    <property type="entry name" value="TPR-like"/>
    <property type="match status" value="1"/>
</dbReference>
<dbReference type="PROSITE" id="PS51184">
    <property type="entry name" value="JMJC"/>
    <property type="match status" value="1"/>
</dbReference>
<dbReference type="PROSITE" id="PS50005">
    <property type="entry name" value="TPR"/>
    <property type="match status" value="7"/>
</dbReference>
<dbReference type="PROSITE" id="PS50293">
    <property type="entry name" value="TPR_REGION"/>
    <property type="match status" value="1"/>
</dbReference>
<protein>
    <recommendedName>
        <fullName>Lysine-specific demethylase 6A</fullName>
        <ecNumber evidence="3">1.14.11.68</ecNumber>
    </recommendedName>
    <alternativeName>
        <fullName>Histone demethylase UTX</fullName>
    </alternativeName>
    <alternativeName>
        <fullName>Ubiquitously transcribed TPR protein on the X chromosome</fullName>
    </alternativeName>
    <alternativeName>
        <fullName>Ubiquitously transcribed X chromosome tetratricopeptide repeat protein</fullName>
    </alternativeName>
    <alternativeName>
        <fullName evidence="10">[histone H3]-trimethyl-L-lysine(27) demethylase 6A</fullName>
    </alternativeName>
</protein>
<organism>
    <name type="scientific">Mus musculus</name>
    <name type="common">Mouse</name>
    <dbReference type="NCBI Taxonomy" id="10090"/>
    <lineage>
        <taxon>Eukaryota</taxon>
        <taxon>Metazoa</taxon>
        <taxon>Chordata</taxon>
        <taxon>Craniata</taxon>
        <taxon>Vertebrata</taxon>
        <taxon>Euteleostomi</taxon>
        <taxon>Mammalia</taxon>
        <taxon>Eutheria</taxon>
        <taxon>Euarchontoglires</taxon>
        <taxon>Glires</taxon>
        <taxon>Rodentia</taxon>
        <taxon>Myomorpha</taxon>
        <taxon>Muroidea</taxon>
        <taxon>Muridae</taxon>
        <taxon>Murinae</taxon>
        <taxon>Mus</taxon>
        <taxon>Mus</taxon>
    </lineage>
</organism>
<reference key="1">
    <citation type="journal article" date="2009" name="PLoS Biol.">
        <title>Lineage-specific biology revealed by a finished genome assembly of the mouse.</title>
        <authorList>
            <person name="Church D.M."/>
            <person name="Goodstadt L."/>
            <person name="Hillier L.W."/>
            <person name="Zody M.C."/>
            <person name="Goldstein S."/>
            <person name="She X."/>
            <person name="Bult C.J."/>
            <person name="Agarwala R."/>
            <person name="Cherry J.L."/>
            <person name="DiCuccio M."/>
            <person name="Hlavina W."/>
            <person name="Kapustin Y."/>
            <person name="Meric P."/>
            <person name="Maglott D."/>
            <person name="Birtle Z."/>
            <person name="Marques A.C."/>
            <person name="Graves T."/>
            <person name="Zhou S."/>
            <person name="Teague B."/>
            <person name="Potamousis K."/>
            <person name="Churas C."/>
            <person name="Place M."/>
            <person name="Herschleb J."/>
            <person name="Runnheim R."/>
            <person name="Forrest D."/>
            <person name="Amos-Landgraf J."/>
            <person name="Schwartz D.C."/>
            <person name="Cheng Z."/>
            <person name="Lindblad-Toh K."/>
            <person name="Eichler E.E."/>
            <person name="Ponting C.P."/>
        </authorList>
    </citation>
    <scope>NUCLEOTIDE SEQUENCE [LARGE SCALE GENOMIC DNA]</scope>
    <source>
        <strain>C57BL/6J</strain>
    </source>
</reference>
<reference key="2">
    <citation type="journal article" date="2004" name="Genome Res.">
        <title>The status, quality, and expansion of the NIH full-length cDNA project: the Mammalian Gene Collection (MGC).</title>
        <authorList>
            <consortium name="The MGC Project Team"/>
        </authorList>
    </citation>
    <scope>NUCLEOTIDE SEQUENCE [LARGE SCALE MRNA] (ISOFORM 2)</scope>
    <scope>NUCLEOTIDE SEQUENCE [LARGE SCALE MRNA] OF 255-1401 (ISOFORM 1)</scope>
    <source>
        <strain>C57BL/6J</strain>
        <tissue>Embryonic germ cell</tissue>
        <tissue>Limb</tissue>
    </source>
</reference>
<reference key="3">
    <citation type="journal article" date="1998" name="Hum. Mol. Genet.">
        <title>The UTX gene escapes X inactivation in mice and humans.</title>
        <authorList>
            <person name="Greenfield A."/>
            <person name="Carrel L."/>
            <person name="Pennisi D."/>
            <person name="Phillippe C."/>
            <person name="Quaderi N."/>
            <person name="Siggers P."/>
            <person name="Steiner K."/>
            <person name="Tam P.P.L."/>
            <person name="Monaco A.P."/>
            <person name="Willard H.F."/>
            <person name="Koopman P."/>
        </authorList>
    </citation>
    <scope>NUCLEOTIDE SEQUENCE [MRNA] OF 69-1401 (ISOFORM 1)</scope>
    <source>
        <strain>C57BL/6J</strain>
        <tissue>Embryo</tissue>
    </source>
</reference>
<reference key="4">
    <citation type="journal article" date="1999" name="Biochem. J.">
        <title>Groucho/transducin-like enhancer of split (TLE) family members interact with the yeast transcriptional co-repressor SSN6 and mammalian SSN6-related proteins: implications for evolutionary conservation of transcription repression mechanisms.</title>
        <authorList>
            <person name="Grbavec D."/>
            <person name="Lo R."/>
            <person name="Liu Y."/>
            <person name="Greenfield A."/>
            <person name="Stifani S."/>
        </authorList>
    </citation>
    <scope>INTERACTION WITH TLE1</scope>
</reference>
<reference key="5">
    <citation type="journal article" date="2004" name="Mol. Cell. Proteomics">
        <title>Phosphoproteomic analysis of the developing mouse brain.</title>
        <authorList>
            <person name="Ballif B.A."/>
            <person name="Villen J."/>
            <person name="Beausoleil S.A."/>
            <person name="Schwartz D."/>
            <person name="Gygi S.P."/>
        </authorList>
    </citation>
    <scope>IDENTIFICATION BY MASS SPECTROMETRY [LARGE SCALE ANALYSIS]</scope>
    <source>
        <tissue>Embryonic brain</tissue>
    </source>
</reference>
<reference key="6">
    <citation type="journal article" date="2010" name="Cell">
        <title>A tissue-specific atlas of mouse protein phosphorylation and expression.</title>
        <authorList>
            <person name="Huttlin E.L."/>
            <person name="Jedrychowski M.P."/>
            <person name="Elias J.E."/>
            <person name="Goswami T."/>
            <person name="Rad R."/>
            <person name="Beausoleil S.A."/>
            <person name="Villen J."/>
            <person name="Haas W."/>
            <person name="Sowa M.E."/>
            <person name="Gygi S.P."/>
        </authorList>
    </citation>
    <scope>PHOSPHORYLATION [LARGE SCALE ANALYSIS] AT SER-769; THR-827 AND SER-829</scope>
    <scope>IDENTIFICATION BY MASS SPECTROMETRY [LARGE SCALE ANALYSIS]</scope>
    <source>
        <tissue>Brown adipose tissue</tissue>
        <tissue>Kidney</tissue>
        <tissue>Lung</tissue>
        <tissue>Spleen</tissue>
    </source>
</reference>
<reference key="7">
    <citation type="journal article" date="2010" name="Mol. Cell">
        <title>Jmjd3 and UTX play a demethylase-independent role in chromatin remodeling to regulate T-box family member-dependent gene expression.</title>
        <authorList>
            <person name="Miller S.A."/>
            <person name="Mohn S.E."/>
            <person name="Weinmann A.S."/>
        </authorList>
    </citation>
    <scope>FUNCTION</scope>
    <scope>INTERACTION WITH SMARCA4</scope>
</reference>
<reference key="8">
    <citation type="journal article" date="2013" name="EMBO J.">
        <title>The histone chaperone Spt6 coordinates histone H3K27 demethylation and myogenesis.</title>
        <authorList>
            <person name="Wang A.H."/>
            <person name="Zare H."/>
            <person name="Mousavi K."/>
            <person name="Wang C."/>
            <person name="Moravec C.E."/>
            <person name="Sirotkin H.I."/>
            <person name="Ge K."/>
            <person name="Gutierrez-Cruz G."/>
            <person name="Sartorelli V."/>
        </authorList>
    </citation>
    <scope>INTERACTION WITH SUPT6H</scope>
</reference>
<reference key="9">
    <citation type="journal article" date="2014" name="Mol. Cell. Proteomics">
        <title>Immunoaffinity enrichment and mass spectrometry analysis of protein methylation.</title>
        <authorList>
            <person name="Guo A."/>
            <person name="Gu H."/>
            <person name="Zhou J."/>
            <person name="Mulhern D."/>
            <person name="Wang Y."/>
            <person name="Lee K.A."/>
            <person name="Yang V."/>
            <person name="Aguiar M."/>
            <person name="Kornhauser J."/>
            <person name="Jia X."/>
            <person name="Ren J."/>
            <person name="Beausoleil S.A."/>
            <person name="Silva J.C."/>
            <person name="Vemulapalli V."/>
            <person name="Bedford M.T."/>
            <person name="Comb M.J."/>
        </authorList>
    </citation>
    <scope>METHYLATION [LARGE SCALE ANALYSIS] AT ARG-519 AND ARG-549</scope>
    <scope>IDENTIFICATION BY MASS SPECTROMETRY [LARGE SCALE ANALYSIS]</scope>
    <source>
        <tissue>Embryo</tissue>
    </source>
</reference>
<feature type="chain" id="PRO_0000106410" description="Lysine-specific demethylase 6A">
    <location>
        <begin position="1"/>
        <end position="1401"/>
    </location>
</feature>
<feature type="repeat" description="TPR 1">
    <location>
        <begin position="95"/>
        <end position="128"/>
    </location>
</feature>
<feature type="repeat" description="TPR 2">
    <location>
        <begin position="132"/>
        <end position="165"/>
    </location>
</feature>
<feature type="repeat" description="TPR 3">
    <location>
        <begin position="169"/>
        <end position="203"/>
    </location>
</feature>
<feature type="repeat" description="TPR 4">
    <location>
        <begin position="207"/>
        <end position="240"/>
    </location>
</feature>
<feature type="repeat" description="TPR 5">
    <location>
        <begin position="245"/>
        <end position="285"/>
    </location>
</feature>
<feature type="repeat" description="TPR 6">
    <location>
        <begin position="286"/>
        <end position="319"/>
    </location>
</feature>
<feature type="repeat" description="TPR 7">
    <location>
        <begin position="321"/>
        <end position="353"/>
    </location>
</feature>
<feature type="repeat" description="TPR 8">
    <location>
        <begin position="355"/>
        <end position="387"/>
    </location>
</feature>
<feature type="domain" description="JmjC" evidence="4">
    <location>
        <begin position="1095"/>
        <end position="1258"/>
    </location>
</feature>
<feature type="region of interest" description="Interaction with SUPT6H" evidence="7">
    <location>
        <begin position="1"/>
        <end position="1095"/>
    </location>
</feature>
<feature type="region of interest" description="Disordered" evidence="5">
    <location>
        <begin position="439"/>
        <end position="463"/>
    </location>
</feature>
<feature type="region of interest" description="Disordered" evidence="5">
    <location>
        <begin position="596"/>
        <end position="745"/>
    </location>
</feature>
<feature type="region of interest" description="Disordered" evidence="5">
    <location>
        <begin position="795"/>
        <end position="863"/>
    </location>
</feature>
<feature type="region of interest" description="Disordered" evidence="5">
    <location>
        <begin position="914"/>
        <end position="941"/>
    </location>
</feature>
<feature type="region of interest" description="Disordered" evidence="5">
    <location>
        <begin position="1043"/>
        <end position="1080"/>
    </location>
</feature>
<feature type="compositionally biased region" description="Polar residues" evidence="5">
    <location>
        <begin position="439"/>
        <end position="453"/>
    </location>
</feature>
<feature type="compositionally biased region" description="Polar residues" evidence="5">
    <location>
        <begin position="596"/>
        <end position="606"/>
    </location>
</feature>
<feature type="compositionally biased region" description="Polar residues" evidence="5">
    <location>
        <begin position="619"/>
        <end position="642"/>
    </location>
</feature>
<feature type="compositionally biased region" description="Polar residues" evidence="5">
    <location>
        <begin position="660"/>
        <end position="743"/>
    </location>
</feature>
<feature type="compositionally biased region" description="Low complexity" evidence="5">
    <location>
        <begin position="814"/>
        <end position="833"/>
    </location>
</feature>
<feature type="compositionally biased region" description="Polar residues" evidence="5">
    <location>
        <begin position="834"/>
        <end position="848"/>
    </location>
</feature>
<feature type="compositionally biased region" description="Pro residues" evidence="5">
    <location>
        <begin position="918"/>
        <end position="931"/>
    </location>
</feature>
<feature type="compositionally biased region" description="Basic and acidic residues" evidence="5">
    <location>
        <begin position="1046"/>
        <end position="1063"/>
    </location>
</feature>
<feature type="binding site" evidence="1">
    <location>
        <position position="1146"/>
    </location>
    <ligand>
        <name>Fe cation</name>
        <dbReference type="ChEBI" id="CHEBI:24875"/>
    </ligand>
</feature>
<feature type="binding site" evidence="1">
    <location>
        <position position="1148"/>
    </location>
    <ligand>
        <name>Fe cation</name>
        <dbReference type="ChEBI" id="CHEBI:24875"/>
    </ligand>
</feature>
<feature type="binding site" evidence="2">
    <location>
        <position position="1226"/>
    </location>
    <ligand>
        <name>Fe cation</name>
        <dbReference type="ChEBI" id="CHEBI:24875"/>
    </ligand>
</feature>
<feature type="binding site" evidence="1">
    <location>
        <position position="1331"/>
    </location>
    <ligand>
        <name>Zn(2+)</name>
        <dbReference type="ChEBI" id="CHEBI:29105"/>
    </ligand>
</feature>
<feature type="binding site" evidence="1">
    <location>
        <position position="1334"/>
    </location>
    <ligand>
        <name>Zn(2+)</name>
        <dbReference type="ChEBI" id="CHEBI:29105"/>
    </ligand>
</feature>
<feature type="binding site" evidence="1">
    <location>
        <position position="1358"/>
    </location>
    <ligand>
        <name>Zn(2+)</name>
        <dbReference type="ChEBI" id="CHEBI:29105"/>
    </ligand>
</feature>
<feature type="binding site" evidence="1">
    <location>
        <position position="1361"/>
    </location>
    <ligand>
        <name>Zn(2+)</name>
        <dbReference type="ChEBI" id="CHEBI:29105"/>
    </ligand>
</feature>
<feature type="modified residue" description="Omega-N-methylarginine" evidence="12">
    <location>
        <position position="519"/>
    </location>
</feature>
<feature type="modified residue" description="Omega-N-methylarginine" evidence="12">
    <location>
        <position position="549"/>
    </location>
</feature>
<feature type="modified residue" description="Phosphoserine" evidence="11">
    <location>
        <position position="769"/>
    </location>
</feature>
<feature type="modified residue" description="Phosphothreonine" evidence="11">
    <location>
        <position position="827"/>
    </location>
</feature>
<feature type="modified residue" description="Phosphoserine" evidence="11">
    <location>
        <position position="829"/>
    </location>
</feature>
<feature type="splice variant" id="VSP_022196" description="In isoform 2." evidence="9">
    <original>APPLPSASS</original>
    <variation>VSEINMLLHYHPPHLDIVPWTLNMRPFLLFRK</variation>
    <location>
        <begin position="1393"/>
        <end position="1401"/>
    </location>
</feature>
<feature type="sequence conflict" description="In Ref. 2; AAH75703." evidence="10" ref="2">
    <original>D</original>
    <variation>G</variation>
    <location>
        <position position="321"/>
    </location>
</feature>
<feature type="sequence conflict" description="In Ref. 2; AAH75703." evidence="10" ref="2">
    <original>E</original>
    <variation>G</variation>
    <location>
        <position position="1198"/>
    </location>
</feature>
<accession>O70546</accession>
<accession>A2AID2</accession>
<accession>Q6DI80</accession>
<accession>Q7TSG4</accession>
<gene>
    <name type="primary">Kdm6a</name>
    <name type="synonym">Utx</name>
</gene>
<comment type="function">
    <text evidence="3 6">Histone demethylase that specifically demethylates 'Lys-27' of histone H3, thereby playing a central role in histone code. Demethylates trimethylated and dimethylated but not monomethylated H3 'Lys-27'. Plays a central role in regulation of posterior development, by regulating HOX gene expression. Demethylation of 'Lys-27' of histone H3 is concomitant with methylation of 'Lys-4' of histone H3, and regulates the recruitment of the PRC1 complex and monoubiquitination of histone H2A (By similarity). Plays a demethylase-independent role in chromatin remodeling to regulate T-box family member-dependent gene expression (PubMed:21095589).</text>
</comment>
<comment type="catalytic activity">
    <reaction evidence="3">
        <text>N(6),N(6),N(6)-trimethyl-L-lysyl(27)-[histone H3] + 2 2-oxoglutarate + 2 O2 = N(6)-methyl-L-lysyl(27)-[histone H3] + 2 formaldehyde + 2 succinate + 2 CO2</text>
        <dbReference type="Rhea" id="RHEA:60224"/>
        <dbReference type="Rhea" id="RHEA-COMP:15535"/>
        <dbReference type="Rhea" id="RHEA-COMP:15544"/>
        <dbReference type="ChEBI" id="CHEBI:15379"/>
        <dbReference type="ChEBI" id="CHEBI:16526"/>
        <dbReference type="ChEBI" id="CHEBI:16810"/>
        <dbReference type="ChEBI" id="CHEBI:16842"/>
        <dbReference type="ChEBI" id="CHEBI:30031"/>
        <dbReference type="ChEBI" id="CHEBI:61929"/>
        <dbReference type="ChEBI" id="CHEBI:61961"/>
        <dbReference type="EC" id="1.14.11.68"/>
    </reaction>
</comment>
<comment type="cofactor">
    <cofactor evidence="1">
        <name>L-ascorbate</name>
        <dbReference type="ChEBI" id="CHEBI:38290"/>
    </cofactor>
</comment>
<comment type="cofactor">
    <cofactor evidence="1">
        <name>Fe(2+)</name>
        <dbReference type="ChEBI" id="CHEBI:29033"/>
    </cofactor>
</comment>
<comment type="subunit">
    <text evidence="3 6 7 8">Component of the MLL2/3 complex (also named ASCOM complex), at least composed of KMT2D/MLL2 or KMT2C/MLL3, ASH2L, RBBP5, WDR5, NCOA6, DPY30, KDM6A (or KDM6B), PAXIP1/PTIP, PAGR1 and alpha- and beta-tubulin (By similarity). Interacts with TLE1 (PubMed:9854018). Interacts with SUPT6H (PubMed:23503590). Interacts with SMARCA4 (PubMed:21095589). Interacts with PROSER1 (By similarity).</text>
</comment>
<comment type="interaction">
    <interactant intactId="EBI-1573712">
        <id>O70546</id>
    </interactant>
    <interactant intactId="EBI-986524">
        <id>Q61321</id>
        <label>Six4</label>
    </interactant>
    <organismsDiffer>false</organismsDiffer>
    <experiments>2</experiments>
</comment>
<comment type="subcellular location">
    <subcellularLocation>
        <location evidence="10">Nucleus</location>
    </subcellularLocation>
</comment>
<comment type="alternative products">
    <event type="alternative splicing"/>
    <isoform>
        <id>O70546-1</id>
        <name>1</name>
        <sequence type="displayed"/>
    </isoform>
    <isoform>
        <id>O70546-2</id>
        <name>2</name>
        <sequence type="described" ref="VSP_022196"/>
    </isoform>
</comment>
<comment type="tissue specificity">
    <text>Expressed in brain, heart and spleen.</text>
</comment>
<comment type="developmental stage">
    <text>Widely expressed at 13.5 dpc.</text>
</comment>
<comment type="miscellaneous">
    <text>Escapes X chromosome inactivation.</text>
</comment>
<comment type="similarity">
    <text evidence="10">Belongs to the UTX family.</text>
</comment>
<comment type="sequence caution" evidence="10">
    <conflict type="miscellaneous discrepancy">
        <sequence resource="EMBL-CDS" id="AAH75703"/>
    </conflict>
</comment>
<keyword id="KW-0025">Alternative splicing</keyword>
<keyword id="KW-0156">Chromatin regulator</keyword>
<keyword id="KW-0223">Dioxygenase</keyword>
<keyword id="KW-0408">Iron</keyword>
<keyword id="KW-0479">Metal-binding</keyword>
<keyword id="KW-0488">Methylation</keyword>
<keyword id="KW-0539">Nucleus</keyword>
<keyword id="KW-0560">Oxidoreductase</keyword>
<keyword id="KW-0597">Phosphoprotein</keyword>
<keyword id="KW-1185">Reference proteome</keyword>
<keyword id="KW-0677">Repeat</keyword>
<keyword id="KW-0802">TPR repeat</keyword>
<keyword id="KW-0862">Zinc</keyword>
<proteinExistence type="evidence at protein level"/>